<name>NLE1_BOVIN</name>
<organism>
    <name type="scientific">Bos taurus</name>
    <name type="common">Bovine</name>
    <dbReference type="NCBI Taxonomy" id="9913"/>
    <lineage>
        <taxon>Eukaryota</taxon>
        <taxon>Metazoa</taxon>
        <taxon>Chordata</taxon>
        <taxon>Craniata</taxon>
        <taxon>Vertebrata</taxon>
        <taxon>Euteleostomi</taxon>
        <taxon>Mammalia</taxon>
        <taxon>Eutheria</taxon>
        <taxon>Laurasiatheria</taxon>
        <taxon>Artiodactyla</taxon>
        <taxon>Ruminantia</taxon>
        <taxon>Pecora</taxon>
        <taxon>Bovidae</taxon>
        <taxon>Bovinae</taxon>
        <taxon>Bos</taxon>
    </lineage>
</organism>
<evidence type="ECO:0000250" key="1"/>
<evidence type="ECO:0000250" key="2">
    <source>
        <dbReference type="UniProtKB" id="P25382"/>
    </source>
</evidence>
<evidence type="ECO:0000250" key="3">
    <source>
        <dbReference type="UniProtKB" id="Q9NVX2"/>
    </source>
</evidence>
<evidence type="ECO:0000255" key="4"/>
<evidence type="ECO:0000305" key="5"/>
<sequence>MAAAAAADEAATRDVQRLLVQFQDEGGQLLGSPFDVPVDITPDKLQLVCNALLAQEDPLPLAFYVHDAEIVSSLGRTLESQAVETEKVLDIIYQPQAIFRVRAVTRCTSSLEGHSEAVISVAFSPTGKYLASGSGDTTVRFWDLSTETPHFTCQGHRHWVLSISWSPDGKKLASGCKNGQILLWDPSTGKQVGRALTGHSKWITALSWEPLHANPECRYVASSSKDGSVRVWDTTAGRCERTLTGHAQSVTCLRWGGDGLLYSASQDRTIKVWRAHDGVLCRTLQGHGHWVNTMALSTDYALRTGAFEPAEASVNAQDLRGSLQELKERALSRYNLVRGQGPERLVSGSDDFTLFLWSPAEDKKPLARMTGHQALINQVVFSPDSRVIASASFDKSIKLWDGRTGKYLASLRGHVAAVYQIAWSADSRLLVSGSSDSTLKVWDVKAQKLSTDLPGHADEVYAVDWSPDGQRVASGGKDKCLRIWRR</sequence>
<gene>
    <name type="primary">NLE1</name>
</gene>
<reference key="1">
    <citation type="journal article" date="2005" name="BMC Genomics">
        <title>Characterization of 954 bovine full-CDS cDNA sequences.</title>
        <authorList>
            <person name="Harhay G.P."/>
            <person name="Sonstegard T.S."/>
            <person name="Keele J.W."/>
            <person name="Heaton M.P."/>
            <person name="Clawson M.L."/>
            <person name="Snelling W.M."/>
            <person name="Wiedmann R.T."/>
            <person name="Van Tassell C.P."/>
            <person name="Smith T.P.L."/>
        </authorList>
    </citation>
    <scope>NUCLEOTIDE SEQUENCE [LARGE SCALE MRNA]</scope>
</reference>
<proteinExistence type="evidence at transcript level"/>
<comment type="function">
    <text evidence="1">Plays a role in regulating Notch activity. Plays a role in regulating the expression of CDKN1A and several members of the Wnt pathway, probably via its effects on Notch activity. Required during embryogenesis for inner mass cell survival (By similarity).</text>
</comment>
<comment type="subunit">
    <text evidence="2 3">Associates with the pre-60S ribosomal particle. Interacts (via WD repeats) with uL18 (By similarity). Interacts (via UBL domain) with MDN1 (via VWFA/MIDAS domain) (By similarity).</text>
</comment>
<comment type="subcellular location">
    <subcellularLocation>
        <location evidence="1">Nucleus</location>
        <location evidence="1">Nucleolus</location>
    </subcellularLocation>
</comment>
<comment type="similarity">
    <text evidence="5">Belongs to the NLE1/RSA4 family.</text>
</comment>
<feature type="chain" id="PRO_0000051097" description="Notchless protein homolog 1">
    <location>
        <begin position="1"/>
        <end position="486"/>
    </location>
</feature>
<feature type="repeat" description="WD 1" evidence="4">
    <location>
        <begin position="113"/>
        <end position="152"/>
    </location>
</feature>
<feature type="repeat" description="WD 2" evidence="4">
    <location>
        <begin position="155"/>
        <end position="194"/>
    </location>
</feature>
<feature type="repeat" description="WD 3" evidence="4">
    <location>
        <begin position="198"/>
        <end position="242"/>
    </location>
</feature>
<feature type="repeat" description="WD 4" evidence="4">
    <location>
        <begin position="245"/>
        <end position="283"/>
    </location>
</feature>
<feature type="repeat" description="WD 5" evidence="4">
    <location>
        <begin position="326"/>
        <end position="367"/>
    </location>
</feature>
<feature type="repeat" description="WD 6" evidence="4">
    <location>
        <begin position="371"/>
        <end position="410"/>
    </location>
</feature>
<feature type="repeat" description="WD 7" evidence="4">
    <location>
        <begin position="413"/>
        <end position="452"/>
    </location>
</feature>
<feature type="repeat" description="WD 8" evidence="4">
    <location>
        <begin position="455"/>
        <end position="486"/>
    </location>
</feature>
<feature type="region of interest" description="Ubiquitin-like (UBL) domain" evidence="2">
    <location>
        <begin position="15"/>
        <end position="97"/>
    </location>
</feature>
<feature type="modified residue" description="Phosphoserine" evidence="3">
    <location>
        <position position="80"/>
    </location>
</feature>
<protein>
    <recommendedName>
        <fullName>Notchless protein homolog 1</fullName>
    </recommendedName>
</protein>
<dbReference type="EMBL" id="BT021777">
    <property type="protein sequence ID" value="AAX46624.1"/>
    <property type="molecule type" value="mRNA"/>
</dbReference>
<dbReference type="RefSeq" id="NP_001014887.1">
    <property type="nucleotide sequence ID" value="NM_001014887.1"/>
</dbReference>
<dbReference type="SMR" id="Q58D20"/>
<dbReference type="FunCoup" id="Q58D20">
    <property type="interactions" value="2360"/>
</dbReference>
<dbReference type="STRING" id="9913.ENSBTAP00000063224"/>
<dbReference type="PaxDb" id="9913-ENSBTAP00000025423"/>
<dbReference type="Ensembl" id="ENSBTAT00000025423.6">
    <property type="protein sequence ID" value="ENSBTAP00000025423.4"/>
    <property type="gene ID" value="ENSBTAG00000019094.6"/>
</dbReference>
<dbReference type="GeneID" id="509793"/>
<dbReference type="KEGG" id="bta:509793"/>
<dbReference type="CTD" id="54475"/>
<dbReference type="VEuPathDB" id="HostDB:ENSBTAG00000019094"/>
<dbReference type="VGNC" id="VGNC:32109">
    <property type="gene designation" value="NLE1"/>
</dbReference>
<dbReference type="eggNOG" id="KOG0271">
    <property type="taxonomic scope" value="Eukaryota"/>
</dbReference>
<dbReference type="GeneTree" id="ENSGT00940000157881"/>
<dbReference type="HOGENOM" id="CLU_000288_57_16_1"/>
<dbReference type="InParanoid" id="Q58D20"/>
<dbReference type="OMA" id="AWEPYHR"/>
<dbReference type="OrthoDB" id="10267436at2759"/>
<dbReference type="TreeFam" id="TF300668"/>
<dbReference type="Proteomes" id="UP000009136">
    <property type="component" value="Chromosome 19"/>
</dbReference>
<dbReference type="Bgee" id="ENSBTAG00000019094">
    <property type="expression patterns" value="Expressed in retina and 106 other cell types or tissues"/>
</dbReference>
<dbReference type="GO" id="GO:0005730">
    <property type="term" value="C:nucleolus"/>
    <property type="evidence" value="ECO:0000318"/>
    <property type="project" value="GO_Central"/>
</dbReference>
<dbReference type="GO" id="GO:0005654">
    <property type="term" value="C:nucleoplasm"/>
    <property type="evidence" value="ECO:0007669"/>
    <property type="project" value="Ensembl"/>
</dbReference>
<dbReference type="GO" id="GO:0061484">
    <property type="term" value="P:hematopoietic stem cell homeostasis"/>
    <property type="evidence" value="ECO:0007669"/>
    <property type="project" value="Ensembl"/>
</dbReference>
<dbReference type="GO" id="GO:0001826">
    <property type="term" value="P:inner cell mass cell differentiation"/>
    <property type="evidence" value="ECO:0007669"/>
    <property type="project" value="Ensembl"/>
</dbReference>
<dbReference type="GO" id="GO:0001822">
    <property type="term" value="P:kidney development"/>
    <property type="evidence" value="ECO:0007669"/>
    <property type="project" value="Ensembl"/>
</dbReference>
<dbReference type="GO" id="GO:0000278">
    <property type="term" value="P:mitotic cell cycle"/>
    <property type="evidence" value="ECO:0007669"/>
    <property type="project" value="Ensembl"/>
</dbReference>
<dbReference type="GO" id="GO:0045930">
    <property type="term" value="P:negative regulation of mitotic cell cycle"/>
    <property type="evidence" value="ECO:0007669"/>
    <property type="project" value="Ensembl"/>
</dbReference>
<dbReference type="GO" id="GO:0007219">
    <property type="term" value="P:Notch signaling pathway"/>
    <property type="evidence" value="ECO:0007669"/>
    <property type="project" value="UniProtKB-KW"/>
</dbReference>
<dbReference type="GO" id="GO:0090263">
    <property type="term" value="P:positive regulation of canonical Wnt signaling pathway"/>
    <property type="evidence" value="ECO:0007669"/>
    <property type="project" value="Ensembl"/>
</dbReference>
<dbReference type="GO" id="GO:0008593">
    <property type="term" value="P:regulation of Notch signaling pathway"/>
    <property type="evidence" value="ECO:0000318"/>
    <property type="project" value="GO_Central"/>
</dbReference>
<dbReference type="GO" id="GO:0042273">
    <property type="term" value="P:ribosomal large subunit biogenesis"/>
    <property type="evidence" value="ECO:0007669"/>
    <property type="project" value="Ensembl"/>
</dbReference>
<dbReference type="GO" id="GO:0048705">
    <property type="term" value="P:skeletal system morphogenesis"/>
    <property type="evidence" value="ECO:0007669"/>
    <property type="project" value="Ensembl"/>
</dbReference>
<dbReference type="GO" id="GO:0001756">
    <property type="term" value="P:somitogenesis"/>
    <property type="evidence" value="ECO:0007669"/>
    <property type="project" value="Ensembl"/>
</dbReference>
<dbReference type="CDD" id="cd00200">
    <property type="entry name" value="WD40"/>
    <property type="match status" value="1"/>
</dbReference>
<dbReference type="FunFam" id="2.130.10.10:FF:000129">
    <property type="entry name" value="Notchless homolog 1 (Drosophila)"/>
    <property type="match status" value="1"/>
</dbReference>
<dbReference type="Gene3D" id="2.130.10.10">
    <property type="entry name" value="YVTN repeat-like/Quinoprotein amine dehydrogenase"/>
    <property type="match status" value="1"/>
</dbReference>
<dbReference type="InterPro" id="IPR020472">
    <property type="entry name" value="G-protein_beta_WD-40_rep"/>
</dbReference>
<dbReference type="InterPro" id="IPR001632">
    <property type="entry name" value="Gprotein_B"/>
</dbReference>
<dbReference type="InterPro" id="IPR012972">
    <property type="entry name" value="NLE"/>
</dbReference>
<dbReference type="InterPro" id="IPR015943">
    <property type="entry name" value="WD40/YVTN_repeat-like_dom_sf"/>
</dbReference>
<dbReference type="InterPro" id="IPR019775">
    <property type="entry name" value="WD40_repeat_CS"/>
</dbReference>
<dbReference type="InterPro" id="IPR036322">
    <property type="entry name" value="WD40_repeat_dom_sf"/>
</dbReference>
<dbReference type="InterPro" id="IPR001680">
    <property type="entry name" value="WD40_rpt"/>
</dbReference>
<dbReference type="PANTHER" id="PTHR19848:SF0">
    <property type="entry name" value="NOTCHLESS PROTEIN HOMOLOG 1"/>
    <property type="match status" value="1"/>
</dbReference>
<dbReference type="PANTHER" id="PTHR19848">
    <property type="entry name" value="WD40 REPEAT PROTEIN"/>
    <property type="match status" value="1"/>
</dbReference>
<dbReference type="Pfam" id="PF08154">
    <property type="entry name" value="NLE"/>
    <property type="match status" value="1"/>
</dbReference>
<dbReference type="Pfam" id="PF00400">
    <property type="entry name" value="WD40"/>
    <property type="match status" value="7"/>
</dbReference>
<dbReference type="PRINTS" id="PR00319">
    <property type="entry name" value="GPROTEINB"/>
</dbReference>
<dbReference type="PRINTS" id="PR00320">
    <property type="entry name" value="GPROTEINBRPT"/>
</dbReference>
<dbReference type="SMART" id="SM00320">
    <property type="entry name" value="WD40"/>
    <property type="match status" value="8"/>
</dbReference>
<dbReference type="SUPFAM" id="SSF50978">
    <property type="entry name" value="WD40 repeat-like"/>
    <property type="match status" value="1"/>
</dbReference>
<dbReference type="PROSITE" id="PS00678">
    <property type="entry name" value="WD_REPEATS_1"/>
    <property type="match status" value="4"/>
</dbReference>
<dbReference type="PROSITE" id="PS50082">
    <property type="entry name" value="WD_REPEATS_2"/>
    <property type="match status" value="7"/>
</dbReference>
<dbReference type="PROSITE" id="PS50294">
    <property type="entry name" value="WD_REPEATS_REGION"/>
    <property type="match status" value="1"/>
</dbReference>
<keyword id="KW-0914">Notch signaling pathway</keyword>
<keyword id="KW-0539">Nucleus</keyword>
<keyword id="KW-0597">Phosphoprotein</keyword>
<keyword id="KW-1185">Reference proteome</keyword>
<keyword id="KW-0677">Repeat</keyword>
<keyword id="KW-0853">WD repeat</keyword>
<accession>Q58D20</accession>